<feature type="chain" id="PRO_0000216262" description="Uncharacterized protein BU584">
    <location>
        <begin position="1"/>
        <end position="367"/>
    </location>
</feature>
<name>Y584_BUCAI</name>
<sequence length="367" mass="43251">MPEQHHSNFFDNEIELSSKKSLDFDFSEIAENIIKTITNTVITTYQTFKTETINLFNGTTFKKIFFSSDENRAKIDSNSEATISLSEHIEQLKRVIESSKVYLRAIIERIRYQGKIKIVNKLNNNPRHPEYQSSFPEITNPIPEPEDENDFYPFKRLDENFDLEGRKSILKMDQNFRQRMNKNIQESYANDFIDESTWTVSDQLNSFNNIQSTIKHFQKKYEFLKSSNDLDNDFMNDTNPFLFVVNNALISVNNRNKMLKDFKTIVPNVEFRQLISTYANQKFLRQSYLQLISEHPEIDQYQIKHSRNIYKINFLDDGSVKLVATNLSDLDVKNDNYIQKYKSFGIRATIILPPNASPIMKYSYFMK</sequence>
<dbReference type="EMBL" id="BA000003">
    <property type="protein sequence ID" value="BAB13273.1"/>
    <property type="molecule type" value="Genomic_DNA"/>
</dbReference>
<dbReference type="RefSeq" id="NP_240387.1">
    <property type="nucleotide sequence ID" value="NC_002528.1"/>
</dbReference>
<dbReference type="RefSeq" id="WP_010896175.1">
    <property type="nucleotide sequence ID" value="NC_002528.1"/>
</dbReference>
<dbReference type="STRING" id="563178.BUAP5A_577"/>
<dbReference type="EnsemblBacteria" id="BAB13273">
    <property type="protein sequence ID" value="BAB13273"/>
    <property type="gene ID" value="BAB13273"/>
</dbReference>
<dbReference type="KEGG" id="buc:BU584"/>
<dbReference type="PATRIC" id="fig|107806.10.peg.589"/>
<dbReference type="eggNOG" id="ENOG502ZKGP">
    <property type="taxonomic scope" value="Bacteria"/>
</dbReference>
<dbReference type="HOGENOM" id="CLU_753720_0_0_6"/>
<dbReference type="BioCyc" id="BAPH107806:GBZJ-577-MONOMER"/>
<dbReference type="Proteomes" id="UP000001806">
    <property type="component" value="Chromosome"/>
</dbReference>
<keyword id="KW-1185">Reference proteome</keyword>
<gene>
    <name type="ordered locus">BU584</name>
</gene>
<proteinExistence type="predicted"/>
<accession>P57644</accession>
<protein>
    <recommendedName>
        <fullName>Uncharacterized protein BU584</fullName>
    </recommendedName>
    <alternativeName>
        <fullName>yba3</fullName>
    </alternativeName>
</protein>
<reference key="1">
    <citation type="journal article" date="2000" name="Nature">
        <title>Genome sequence of the endocellular bacterial symbiont of aphids Buchnera sp. APS.</title>
        <authorList>
            <person name="Shigenobu S."/>
            <person name="Watanabe H."/>
            <person name="Hattori M."/>
            <person name="Sakaki Y."/>
            <person name="Ishikawa H."/>
        </authorList>
    </citation>
    <scope>NUCLEOTIDE SEQUENCE [LARGE SCALE GENOMIC DNA]</scope>
    <source>
        <strain>APS</strain>
    </source>
</reference>
<organism>
    <name type="scientific">Buchnera aphidicola subsp. Acyrthosiphon pisum (strain APS)</name>
    <name type="common">Acyrthosiphon pisum symbiotic bacterium</name>
    <dbReference type="NCBI Taxonomy" id="107806"/>
    <lineage>
        <taxon>Bacteria</taxon>
        <taxon>Pseudomonadati</taxon>
        <taxon>Pseudomonadota</taxon>
        <taxon>Gammaproteobacteria</taxon>
        <taxon>Enterobacterales</taxon>
        <taxon>Erwiniaceae</taxon>
        <taxon>Buchnera</taxon>
    </lineage>
</organism>